<keyword id="KW-0963">Cytoplasm</keyword>
<keyword id="KW-0460">Magnesium</keyword>
<keyword id="KW-0479">Metal-binding</keyword>
<keyword id="KW-0548">Nucleotidyltransferase</keyword>
<keyword id="KW-1185">Reference proteome</keyword>
<keyword id="KW-0694">RNA-binding</keyword>
<keyword id="KW-0808">Transferase</keyword>
<proteinExistence type="evidence at protein level"/>
<evidence type="ECO:0000255" key="1">
    <source>
        <dbReference type="HAMAP-Rule" id="MF_01595"/>
    </source>
</evidence>
<gene>
    <name evidence="1" type="primary">pnp</name>
    <name type="ordered locus">PSHAa1001</name>
</gene>
<name>PNP_PSET1</name>
<organism>
    <name type="scientific">Pseudoalteromonas translucida (strain TAC 125)</name>
    <dbReference type="NCBI Taxonomy" id="326442"/>
    <lineage>
        <taxon>Bacteria</taxon>
        <taxon>Pseudomonadati</taxon>
        <taxon>Pseudomonadota</taxon>
        <taxon>Gammaproteobacteria</taxon>
        <taxon>Alteromonadales</taxon>
        <taxon>Pseudoalteromonadaceae</taxon>
        <taxon>Pseudoalteromonas</taxon>
    </lineage>
</organism>
<comment type="function">
    <text evidence="1">Involved in mRNA degradation. Catalyzes the phosphorolysis of single-stranded polyribonucleotides processively in the 3'- to 5'-direction.</text>
</comment>
<comment type="catalytic activity">
    <reaction evidence="1">
        <text>RNA(n+1) + phosphate = RNA(n) + a ribonucleoside 5'-diphosphate</text>
        <dbReference type="Rhea" id="RHEA:22096"/>
        <dbReference type="Rhea" id="RHEA-COMP:14527"/>
        <dbReference type="Rhea" id="RHEA-COMP:17342"/>
        <dbReference type="ChEBI" id="CHEBI:43474"/>
        <dbReference type="ChEBI" id="CHEBI:57930"/>
        <dbReference type="ChEBI" id="CHEBI:140395"/>
        <dbReference type="EC" id="2.7.7.8"/>
    </reaction>
</comment>
<comment type="cofactor">
    <cofactor evidence="1">
        <name>Mg(2+)</name>
        <dbReference type="ChEBI" id="CHEBI:18420"/>
    </cofactor>
</comment>
<comment type="subunit">
    <text evidence="1">Component of the RNA degradosome, which is a multiprotein complex involved in RNA processing and mRNA degradation.</text>
</comment>
<comment type="interaction">
    <interactant intactId="EBI-6412396">
        <id>Q3IJ73</id>
    </interactant>
    <interactant intactId="EBI-6412370">
        <id>Q3IHD2</id>
        <label>rne</label>
    </interactant>
    <organismsDiffer>false</organismsDiffer>
    <experiments>2</experiments>
</comment>
<comment type="subcellular location">
    <subcellularLocation>
        <location evidence="1">Cytoplasm</location>
    </subcellularLocation>
</comment>
<comment type="similarity">
    <text evidence="1">Belongs to the polyribonucleotide nucleotidyltransferase family.</text>
</comment>
<sequence>MQAIIKEFQLGQHTVTLETGAIARQADGAVLASIGDTSVLVTVVGKREAQPGQDFFPLTVNYQERMYAAGRIPGGFLKREGRPNDGETLIARLIDRPIRPLFPSGFVNEVQVIATVVSVNPEIQPDMVALIGTSAALAISGIPFSGPIGATRVGYIDGEYVLNPTLKELEESKLDLVVAGTDNAVLMVESEADVLAEDIMLGAVVYGHEQAQAIITAIKEFKAEAGKPTWDWTAPAKNVSLEEKVASIAADKVGEAYRITDKVARKEALGVAKDEVVAVLTSELAEGESLDKQEIGKIFGSLEKKIVRGRIAAGEKRIDGREPDMIRALDVMTGVLPRTHGSAIFTRGETQALVTATLGTERDSQLIDDLTGTHKNHFMLNYNFPPFCVGETGFVGSPKRREIGHGNLAKRGIAAVMPTLTEFPYSIRVVSEITESNGSSSMASVCGTSLALMNAGVPIKASVAGIAMGLVKEDDKFVVLSDILGDEDHLGDMDFKVAGTAGGITALQMDIKIEGITQEIMQIALKQAKAARLHILEVMDKAISAPSEELSQFAPRIYTMKIPQKKIAEVIGKGGATIRQLTEETGTTIEIGDDGTIKIAATDGESAANAISRIEQLTAELEVGTIYEGKVVRIVDFGAFVNILPGKDGLVHISQISTERVNNVTDHLSEGQEVKVKVLEVDRQGRVRLSIKEAMESAAPAADAPTDA</sequence>
<protein>
    <recommendedName>
        <fullName evidence="1">Polyribonucleotide nucleotidyltransferase</fullName>
        <ecNumber evidence="1">2.7.7.8</ecNumber>
    </recommendedName>
    <alternativeName>
        <fullName evidence="1">Polynucleotide phosphorylase</fullName>
        <shortName evidence="1">PNPase</shortName>
    </alternativeName>
</protein>
<feature type="chain" id="PRO_0000329777" description="Polyribonucleotide nucleotidyltransferase">
    <location>
        <begin position="1"/>
        <end position="708"/>
    </location>
</feature>
<feature type="domain" description="KH" evidence="1">
    <location>
        <begin position="555"/>
        <end position="614"/>
    </location>
</feature>
<feature type="domain" description="S1 motif" evidence="1">
    <location>
        <begin position="624"/>
        <end position="692"/>
    </location>
</feature>
<feature type="binding site" evidence="1">
    <location>
        <position position="488"/>
    </location>
    <ligand>
        <name>Mg(2+)</name>
        <dbReference type="ChEBI" id="CHEBI:18420"/>
    </ligand>
</feature>
<feature type="binding site" evidence="1">
    <location>
        <position position="494"/>
    </location>
    <ligand>
        <name>Mg(2+)</name>
        <dbReference type="ChEBI" id="CHEBI:18420"/>
    </ligand>
</feature>
<dbReference type="EC" id="2.7.7.8" evidence="1"/>
<dbReference type="EMBL" id="CR954246">
    <property type="protein sequence ID" value="CAI86079.1"/>
    <property type="molecule type" value="Genomic_DNA"/>
</dbReference>
<dbReference type="SMR" id="Q3IJ73"/>
<dbReference type="IntAct" id="Q3IJ73">
    <property type="interactions" value="1"/>
</dbReference>
<dbReference type="STRING" id="326442.PSHAa1001"/>
<dbReference type="KEGG" id="pha:PSHAa1001"/>
<dbReference type="PATRIC" id="fig|326442.8.peg.961"/>
<dbReference type="eggNOG" id="COG1185">
    <property type="taxonomic scope" value="Bacteria"/>
</dbReference>
<dbReference type="HOGENOM" id="CLU_004217_2_2_6"/>
<dbReference type="BioCyc" id="PHAL326442:PSHA_RS04890-MONOMER"/>
<dbReference type="Proteomes" id="UP000006843">
    <property type="component" value="Chromosome I"/>
</dbReference>
<dbReference type="GO" id="GO:0005829">
    <property type="term" value="C:cytosol"/>
    <property type="evidence" value="ECO:0007669"/>
    <property type="project" value="TreeGrafter"/>
</dbReference>
<dbReference type="GO" id="GO:0000175">
    <property type="term" value="F:3'-5'-RNA exonuclease activity"/>
    <property type="evidence" value="ECO:0007669"/>
    <property type="project" value="TreeGrafter"/>
</dbReference>
<dbReference type="GO" id="GO:0000287">
    <property type="term" value="F:magnesium ion binding"/>
    <property type="evidence" value="ECO:0007669"/>
    <property type="project" value="UniProtKB-UniRule"/>
</dbReference>
<dbReference type="GO" id="GO:0004654">
    <property type="term" value="F:polyribonucleotide nucleotidyltransferase activity"/>
    <property type="evidence" value="ECO:0007669"/>
    <property type="project" value="UniProtKB-UniRule"/>
</dbReference>
<dbReference type="GO" id="GO:0003723">
    <property type="term" value="F:RNA binding"/>
    <property type="evidence" value="ECO:0007669"/>
    <property type="project" value="UniProtKB-UniRule"/>
</dbReference>
<dbReference type="GO" id="GO:0006402">
    <property type="term" value="P:mRNA catabolic process"/>
    <property type="evidence" value="ECO:0007669"/>
    <property type="project" value="UniProtKB-UniRule"/>
</dbReference>
<dbReference type="GO" id="GO:0006396">
    <property type="term" value="P:RNA processing"/>
    <property type="evidence" value="ECO:0007669"/>
    <property type="project" value="InterPro"/>
</dbReference>
<dbReference type="CDD" id="cd02393">
    <property type="entry name" value="KH-I_PNPase"/>
    <property type="match status" value="1"/>
</dbReference>
<dbReference type="CDD" id="cd11363">
    <property type="entry name" value="RNase_PH_PNPase_1"/>
    <property type="match status" value="1"/>
</dbReference>
<dbReference type="CDD" id="cd11364">
    <property type="entry name" value="RNase_PH_PNPase_2"/>
    <property type="match status" value="1"/>
</dbReference>
<dbReference type="CDD" id="cd04472">
    <property type="entry name" value="S1_PNPase"/>
    <property type="match status" value="1"/>
</dbReference>
<dbReference type="FunFam" id="2.40.50.140:FF:000023">
    <property type="entry name" value="Polyribonucleotide nucleotidyltransferase"/>
    <property type="match status" value="1"/>
</dbReference>
<dbReference type="FunFam" id="3.30.1370.10:FF:000001">
    <property type="entry name" value="Polyribonucleotide nucleotidyltransferase"/>
    <property type="match status" value="1"/>
</dbReference>
<dbReference type="FunFam" id="3.30.230.70:FF:000001">
    <property type="entry name" value="Polyribonucleotide nucleotidyltransferase"/>
    <property type="match status" value="1"/>
</dbReference>
<dbReference type="FunFam" id="3.30.230.70:FF:000002">
    <property type="entry name" value="Polyribonucleotide nucleotidyltransferase"/>
    <property type="match status" value="1"/>
</dbReference>
<dbReference type="Gene3D" id="3.30.230.70">
    <property type="entry name" value="GHMP Kinase, N-terminal domain"/>
    <property type="match status" value="2"/>
</dbReference>
<dbReference type="Gene3D" id="3.30.1370.10">
    <property type="entry name" value="K Homology domain, type 1"/>
    <property type="match status" value="1"/>
</dbReference>
<dbReference type="Gene3D" id="2.40.50.140">
    <property type="entry name" value="Nucleic acid-binding proteins"/>
    <property type="match status" value="1"/>
</dbReference>
<dbReference type="HAMAP" id="MF_01595">
    <property type="entry name" value="PNPase"/>
    <property type="match status" value="1"/>
</dbReference>
<dbReference type="InterPro" id="IPR001247">
    <property type="entry name" value="ExoRNase_PH_dom1"/>
</dbReference>
<dbReference type="InterPro" id="IPR015847">
    <property type="entry name" value="ExoRNase_PH_dom2"/>
</dbReference>
<dbReference type="InterPro" id="IPR036345">
    <property type="entry name" value="ExoRNase_PH_dom2_sf"/>
</dbReference>
<dbReference type="InterPro" id="IPR004087">
    <property type="entry name" value="KH_dom"/>
</dbReference>
<dbReference type="InterPro" id="IPR004088">
    <property type="entry name" value="KH_dom_type_1"/>
</dbReference>
<dbReference type="InterPro" id="IPR036612">
    <property type="entry name" value="KH_dom_type_1_sf"/>
</dbReference>
<dbReference type="InterPro" id="IPR012340">
    <property type="entry name" value="NA-bd_OB-fold"/>
</dbReference>
<dbReference type="InterPro" id="IPR012162">
    <property type="entry name" value="PNPase"/>
</dbReference>
<dbReference type="InterPro" id="IPR027408">
    <property type="entry name" value="PNPase/RNase_PH_dom_sf"/>
</dbReference>
<dbReference type="InterPro" id="IPR015848">
    <property type="entry name" value="PNPase_PH_RNA-bd_bac/org-type"/>
</dbReference>
<dbReference type="InterPro" id="IPR036456">
    <property type="entry name" value="PNPase_PH_RNA-bd_sf"/>
</dbReference>
<dbReference type="InterPro" id="IPR020568">
    <property type="entry name" value="Ribosomal_Su5_D2-typ_SF"/>
</dbReference>
<dbReference type="InterPro" id="IPR003029">
    <property type="entry name" value="S1_domain"/>
</dbReference>
<dbReference type="NCBIfam" id="TIGR03591">
    <property type="entry name" value="polynuc_phos"/>
    <property type="match status" value="1"/>
</dbReference>
<dbReference type="NCBIfam" id="NF008805">
    <property type="entry name" value="PRK11824.1"/>
    <property type="match status" value="1"/>
</dbReference>
<dbReference type="PANTHER" id="PTHR11252">
    <property type="entry name" value="POLYRIBONUCLEOTIDE NUCLEOTIDYLTRANSFERASE"/>
    <property type="match status" value="1"/>
</dbReference>
<dbReference type="PANTHER" id="PTHR11252:SF0">
    <property type="entry name" value="POLYRIBONUCLEOTIDE NUCLEOTIDYLTRANSFERASE 1, MITOCHONDRIAL"/>
    <property type="match status" value="1"/>
</dbReference>
<dbReference type="Pfam" id="PF00013">
    <property type="entry name" value="KH_1"/>
    <property type="match status" value="1"/>
</dbReference>
<dbReference type="Pfam" id="PF03726">
    <property type="entry name" value="PNPase"/>
    <property type="match status" value="1"/>
</dbReference>
<dbReference type="Pfam" id="PF01138">
    <property type="entry name" value="RNase_PH"/>
    <property type="match status" value="2"/>
</dbReference>
<dbReference type="Pfam" id="PF03725">
    <property type="entry name" value="RNase_PH_C"/>
    <property type="match status" value="2"/>
</dbReference>
<dbReference type="Pfam" id="PF00575">
    <property type="entry name" value="S1"/>
    <property type="match status" value="1"/>
</dbReference>
<dbReference type="PIRSF" id="PIRSF005499">
    <property type="entry name" value="PNPase"/>
    <property type="match status" value="1"/>
</dbReference>
<dbReference type="SMART" id="SM00322">
    <property type="entry name" value="KH"/>
    <property type="match status" value="1"/>
</dbReference>
<dbReference type="SMART" id="SM00316">
    <property type="entry name" value="S1"/>
    <property type="match status" value="1"/>
</dbReference>
<dbReference type="SUPFAM" id="SSF54791">
    <property type="entry name" value="Eukaryotic type KH-domain (KH-domain type I)"/>
    <property type="match status" value="1"/>
</dbReference>
<dbReference type="SUPFAM" id="SSF50249">
    <property type="entry name" value="Nucleic acid-binding proteins"/>
    <property type="match status" value="1"/>
</dbReference>
<dbReference type="SUPFAM" id="SSF46915">
    <property type="entry name" value="Polynucleotide phosphorylase/guanosine pentaphosphate synthase (PNPase/GPSI), domain 3"/>
    <property type="match status" value="1"/>
</dbReference>
<dbReference type="SUPFAM" id="SSF55666">
    <property type="entry name" value="Ribonuclease PH domain 2-like"/>
    <property type="match status" value="2"/>
</dbReference>
<dbReference type="SUPFAM" id="SSF54211">
    <property type="entry name" value="Ribosomal protein S5 domain 2-like"/>
    <property type="match status" value="2"/>
</dbReference>
<dbReference type="PROSITE" id="PS50084">
    <property type="entry name" value="KH_TYPE_1"/>
    <property type="match status" value="1"/>
</dbReference>
<dbReference type="PROSITE" id="PS50126">
    <property type="entry name" value="S1"/>
    <property type="match status" value="1"/>
</dbReference>
<accession>Q3IJ73</accession>
<reference key="1">
    <citation type="journal article" date="2005" name="Genome Res.">
        <title>Coping with cold: the genome of the versatile marine Antarctica bacterium Pseudoalteromonas haloplanktis TAC125.</title>
        <authorList>
            <person name="Medigue C."/>
            <person name="Krin E."/>
            <person name="Pascal G."/>
            <person name="Barbe V."/>
            <person name="Bernsel A."/>
            <person name="Bertin P.N."/>
            <person name="Cheung F."/>
            <person name="Cruveiller S."/>
            <person name="D'Amico S."/>
            <person name="Duilio A."/>
            <person name="Fang G."/>
            <person name="Feller G."/>
            <person name="Ho C."/>
            <person name="Mangenot S."/>
            <person name="Marino G."/>
            <person name="Nilsson J."/>
            <person name="Parrilli E."/>
            <person name="Rocha E.P.C."/>
            <person name="Rouy Z."/>
            <person name="Sekowska A."/>
            <person name="Tutino M.L."/>
            <person name="Vallenet D."/>
            <person name="von Heijne G."/>
            <person name="Danchin A."/>
        </authorList>
    </citation>
    <scope>NUCLEOTIDE SEQUENCE [LARGE SCALE GENOMIC DNA]</scope>
    <source>
        <strain>TAC 125</strain>
    </source>
</reference>